<name>SCX1_CENLI</name>
<comment type="function">
    <text evidence="2 4">Beta toxin that binds site-4 of sodium channels (Nav) and reduces peak current (observed on Nav1.1/SCN1A, Nav1.2/SCN2A, Nav1.3/SCN3A, Nav1.4/SCN5A, Nav1.5/SCN4A, and Nav1.6/SCN8A (IC(50)=44.9 nM)), shifts the voltage of activation toward more negative potentials (observed on Nav1.6, Nav1.1 (weak), Nav1.2 (weak), and Nav1.7 (weak)), and induces resurgent currents at negative voltages following brief and strong depolarizations (observed on Nav1.6, Nav1.1 (weak), Nav1.2 (weak), and Nav1.4 (weak)) (PubMed:22200496). This toxin is only active on crustaceans (PubMed:7727365).</text>
</comment>
<comment type="subcellular location">
    <subcellularLocation>
        <location evidence="4">Secreted</location>
    </subcellularLocation>
</comment>
<comment type="tissue specificity">
    <text evidence="7">Expressed by the venom gland.</text>
</comment>
<comment type="domain">
    <text evidence="6">Has the structural arrangement of an alpha-helix connected to antiparallel beta-sheets by disulfide bonds (CS-alpha/beta).</text>
</comment>
<comment type="miscellaneous">
    <text evidence="2">Negative results: does not show inhibition of peak current on Nav1.7/SCN9A (at 560 nM).</text>
</comment>
<comment type="miscellaneous">
    <text evidence="3">Negative results: is neutralized by the single-chain antibody fragment 10FG2.</text>
</comment>
<comment type="similarity">
    <text evidence="6">Belongs to the long (4 C-C) scorpion toxin superfamily. Sodium channel inhibitor family. Beta subfamily.</text>
</comment>
<dbReference type="PIR" id="A55869">
    <property type="entry name" value="A55869"/>
</dbReference>
<dbReference type="SMR" id="P45667"/>
<dbReference type="TCDB" id="8.B.1.2.1">
    <property type="family name" value="the long (4c-c) scorpion toxin (l-st) superfamily"/>
</dbReference>
<dbReference type="GO" id="GO:0005576">
    <property type="term" value="C:extracellular region"/>
    <property type="evidence" value="ECO:0007669"/>
    <property type="project" value="UniProtKB-SubCell"/>
</dbReference>
<dbReference type="GO" id="GO:0019871">
    <property type="term" value="F:sodium channel inhibitor activity"/>
    <property type="evidence" value="ECO:0007669"/>
    <property type="project" value="InterPro"/>
</dbReference>
<dbReference type="GO" id="GO:0090729">
    <property type="term" value="F:toxin activity"/>
    <property type="evidence" value="ECO:0007669"/>
    <property type="project" value="UniProtKB-KW"/>
</dbReference>
<dbReference type="GO" id="GO:0006952">
    <property type="term" value="P:defense response"/>
    <property type="evidence" value="ECO:0007669"/>
    <property type="project" value="InterPro"/>
</dbReference>
<dbReference type="CDD" id="cd23106">
    <property type="entry name" value="neurotoxins_LC_scorpion"/>
    <property type="match status" value="1"/>
</dbReference>
<dbReference type="FunFam" id="3.30.30.10:FF:000002">
    <property type="entry name" value="Alpha-like toxin BmK-M1"/>
    <property type="match status" value="1"/>
</dbReference>
<dbReference type="Gene3D" id="3.30.30.10">
    <property type="entry name" value="Knottin, scorpion toxin-like"/>
    <property type="match status" value="1"/>
</dbReference>
<dbReference type="InterPro" id="IPR044062">
    <property type="entry name" value="LCN-type_CS_alpha_beta_dom"/>
</dbReference>
<dbReference type="InterPro" id="IPR003614">
    <property type="entry name" value="Scorpion_toxin-like"/>
</dbReference>
<dbReference type="InterPro" id="IPR036574">
    <property type="entry name" value="Scorpion_toxin-like_sf"/>
</dbReference>
<dbReference type="InterPro" id="IPR018218">
    <property type="entry name" value="Scorpion_toxinL"/>
</dbReference>
<dbReference type="InterPro" id="IPR002061">
    <property type="entry name" value="Scorpion_toxinL/defensin"/>
</dbReference>
<dbReference type="Pfam" id="PF00537">
    <property type="entry name" value="Toxin_3"/>
    <property type="match status" value="1"/>
</dbReference>
<dbReference type="PRINTS" id="PR00285">
    <property type="entry name" value="SCORPNTOXIN"/>
</dbReference>
<dbReference type="SMART" id="SM00505">
    <property type="entry name" value="Knot1"/>
    <property type="match status" value="1"/>
</dbReference>
<dbReference type="SUPFAM" id="SSF57095">
    <property type="entry name" value="Scorpion toxin-like"/>
    <property type="match status" value="1"/>
</dbReference>
<dbReference type="PROSITE" id="PS51863">
    <property type="entry name" value="LCN_CSAB"/>
    <property type="match status" value="1"/>
</dbReference>
<proteinExistence type="evidence at protein level"/>
<organism>
    <name type="scientific">Centruroides limpidus</name>
    <name type="common">Mexican scorpion</name>
    <dbReference type="NCBI Taxonomy" id="6876"/>
    <lineage>
        <taxon>Eukaryota</taxon>
        <taxon>Metazoa</taxon>
        <taxon>Ecdysozoa</taxon>
        <taxon>Arthropoda</taxon>
        <taxon>Chelicerata</taxon>
        <taxon>Arachnida</taxon>
        <taxon>Scorpiones</taxon>
        <taxon>Buthida</taxon>
        <taxon>Buthoidea</taxon>
        <taxon>Buthidae</taxon>
        <taxon>Centruroides</taxon>
    </lineage>
</organism>
<keyword id="KW-0903">Direct protein sequencing</keyword>
<keyword id="KW-1015">Disulfide bond</keyword>
<keyword id="KW-0872">Ion channel impairing toxin</keyword>
<keyword id="KW-0528">Neurotoxin</keyword>
<keyword id="KW-0964">Secreted</keyword>
<keyword id="KW-0800">Toxin</keyword>
<keyword id="KW-0738">Voltage-gated sodium channel impairing toxin</keyword>
<accession>P45667</accession>
<feature type="chain" id="PRO_0000066765" description="Toxin Cll1" evidence="4">
    <location>
        <begin position="1"/>
        <end position="66"/>
    </location>
</feature>
<feature type="domain" description="LCN-type CS-alpha/beta" evidence="1">
    <location>
        <begin position="1"/>
        <end position="66"/>
    </location>
</feature>
<feature type="disulfide bond" evidence="4">
    <location>
        <begin position="12"/>
        <end position="65"/>
    </location>
</feature>
<feature type="disulfide bond" evidence="4">
    <location>
        <begin position="16"/>
        <end position="41"/>
    </location>
</feature>
<feature type="disulfide bond" evidence="4">
    <location>
        <begin position="25"/>
        <end position="46"/>
    </location>
</feature>
<feature type="disulfide bond" evidence="4">
    <location>
        <begin position="29"/>
        <end position="48"/>
    </location>
</feature>
<evidence type="ECO:0000255" key="1">
    <source>
        <dbReference type="PROSITE-ProRule" id="PRU01210"/>
    </source>
</evidence>
<evidence type="ECO:0000269" key="2">
    <source>
    </source>
</evidence>
<evidence type="ECO:0000269" key="3">
    <source>
    </source>
</evidence>
<evidence type="ECO:0000269" key="4">
    <source>
    </source>
</evidence>
<evidence type="ECO:0000303" key="5">
    <source>
    </source>
</evidence>
<evidence type="ECO:0000305" key="6"/>
<evidence type="ECO:0000305" key="7">
    <source>
    </source>
</evidence>
<sequence>KEGYLVNKSTGCKYGCFWLGKNENCDKECKAKNQGGSYGYCYSFACWCEGLPESTPTYPLPNKSCS</sequence>
<protein>
    <recommendedName>
        <fullName evidence="6">Toxin Cll1</fullName>
    </recommendedName>
    <alternativeName>
        <fullName evidence="5">Cll toxin 1</fullName>
    </alternativeName>
    <alternativeName>
        <fullName evidence="5">Crustacean toxin 1</fullName>
    </alternativeName>
</protein>
<reference key="1">
    <citation type="journal article" date="1994" name="Biochemistry">
        <title>Primary and NMR three-dimensional structure determination of a novel crustacean toxin from the venom of the scorpion Centruroides limpidus limpidus Karsch.</title>
        <authorList>
            <person name="Lebreton F."/>
            <person name="Delepierre M."/>
            <person name="Ramirez A.N."/>
            <person name="Balderas C."/>
            <person name="Possani L.D."/>
        </authorList>
    </citation>
    <scope>PROTEIN SEQUENCE</scope>
    <scope>DISULFIDE BONDS</scope>
    <scope>STRUCTURE BY NMR</scope>
    <scope>SUBCELLULAR LOCATION</scope>
    <source>
        <tissue>Venom</tissue>
    </source>
</reference>
<reference key="2">
    <citation type="journal article" date="2012" name="Toxicon">
        <title>Negative-shift activation, current reduction and resurgent currents induced by beta-toxins from Centruroides scorpions in sodium channels.</title>
        <authorList>
            <person name="Schiavon E."/>
            <person name="Pedraza-Escalona M."/>
            <person name="Gurrola G.B."/>
            <person name="Olamendi-Portugal T."/>
            <person name="Corzo G."/>
            <person name="Wanke E."/>
            <person name="Possani L.D."/>
        </authorList>
    </citation>
    <scope>FUNCTION</scope>
    <scope>3D-STRUCTURE MODELING</scope>
    <source>
        <tissue>Venom</tissue>
    </source>
</reference>
<reference key="3">
    <citation type="journal article" date="2019" name="Toxins">
        <title>Generation of a broadly cross-neutralizing antibody fragment against several mexican scorpion venoms.</title>
        <authorList>
            <person name="Riano-Umbarila L."/>
            <person name="Gomez-Ramirez I.V."/>
            <person name="Ledezma-Candanoza L.M."/>
            <person name="Olamendi-Portugal T."/>
            <person name="Rodriguez-Rodriguez E.R."/>
            <person name="Fernandez-Taboada G."/>
            <person name="Possani L.D."/>
            <person name="Becerril B."/>
        </authorList>
    </citation>
    <scope>NEUTRALIZATION BY ANTIBODY</scope>
</reference>